<feature type="chain" id="PRO_0000106390" description="Tetratricopeptide repeat protein 9A">
    <location>
        <begin position="1"/>
        <end position="222"/>
    </location>
</feature>
<feature type="repeat" description="TPR 1">
    <location>
        <begin position="56"/>
        <end position="89"/>
    </location>
</feature>
<feature type="repeat" description="TPR 2">
    <location>
        <begin position="125"/>
        <end position="160"/>
    </location>
</feature>
<feature type="repeat" description="TPR 3">
    <location>
        <begin position="161"/>
        <end position="194"/>
    </location>
</feature>
<feature type="region of interest" description="Disordered" evidence="1">
    <location>
        <begin position="1"/>
        <end position="49"/>
    </location>
</feature>
<feature type="region of interest" description="Disordered" evidence="1">
    <location>
        <begin position="88"/>
        <end position="116"/>
    </location>
</feature>
<feature type="modified residue" description="Phosphoserine" evidence="5">
    <location>
        <position position="105"/>
    </location>
</feature>
<feature type="sequence variant" id="VAR_060330" description="In dbSNP:rs4902834." evidence="2 3 5">
    <original>P</original>
    <variation>A</variation>
    <location>
        <position position="103"/>
    </location>
</feature>
<proteinExistence type="evidence at protein level"/>
<organism>
    <name type="scientific">Homo sapiens</name>
    <name type="common">Human</name>
    <dbReference type="NCBI Taxonomy" id="9606"/>
    <lineage>
        <taxon>Eukaryota</taxon>
        <taxon>Metazoa</taxon>
        <taxon>Chordata</taxon>
        <taxon>Craniata</taxon>
        <taxon>Vertebrata</taxon>
        <taxon>Euteleostomi</taxon>
        <taxon>Mammalia</taxon>
        <taxon>Eutheria</taxon>
        <taxon>Euarchontoglires</taxon>
        <taxon>Primates</taxon>
        <taxon>Haplorrhini</taxon>
        <taxon>Catarrhini</taxon>
        <taxon>Hominidae</taxon>
        <taxon>Homo</taxon>
    </lineage>
</organism>
<gene>
    <name type="primary">TTC9</name>
    <name type="synonym">KIAA0227</name>
    <name type="synonym">TTC9A</name>
</gene>
<comment type="similarity">
    <text evidence="4">Belongs to the TTC9 family.</text>
</comment>
<comment type="sequence caution" evidence="4">
    <conflict type="erroneous initiation">
        <sequence resource="EMBL-CDS" id="AAH47950"/>
    </conflict>
    <text>Extended N-terminus.</text>
</comment>
<comment type="sequence caution" evidence="4">
    <conflict type="erroneous initiation">
        <sequence resource="EMBL-CDS" id="BAA13216"/>
    </conflict>
    <text>Extended N-terminus.</text>
</comment>
<protein>
    <recommendedName>
        <fullName>Tetratricopeptide repeat protein 9A</fullName>
        <shortName>TPR repeat protein 9A</shortName>
    </recommendedName>
</protein>
<evidence type="ECO:0000256" key="1">
    <source>
        <dbReference type="SAM" id="MobiDB-lite"/>
    </source>
</evidence>
<evidence type="ECO:0000269" key="2">
    <source>
    </source>
</evidence>
<evidence type="ECO:0000269" key="3">
    <source>
    </source>
</evidence>
<evidence type="ECO:0000305" key="4"/>
<evidence type="ECO:0007744" key="5">
    <source>
    </source>
</evidence>
<keyword id="KW-0597">Phosphoprotein</keyword>
<keyword id="KW-1267">Proteomics identification</keyword>
<keyword id="KW-1185">Reference proteome</keyword>
<keyword id="KW-0677">Repeat</keyword>
<keyword id="KW-0802">TPR repeat</keyword>
<sequence length="222" mass="24379">MERKGSAAGAKGNPSPPAAGEGQRPPPPLCVPGGGGGAPARGQVGAAAEPAELIRRAHEFKSQGAQCYKDKKFREAIGKYHRALLELKGLLPPPGERERDSRPASPAGALKPGRLSEEQSKTVEAIEIDCYNSLAACLLQAELVNYERVKEYCLKVLKKEGENFKALYRSGVAFYHLGDYDKALYYLKEARTQQPTDTNVIRYIQLTEMKLSRCSQREKEAM</sequence>
<reference key="1">
    <citation type="journal article" date="1996" name="DNA Res.">
        <title>Prediction of the coding sequences of unidentified human genes. VI. The coding sequences of 80 new genes (KIAA0201-KIAA0280) deduced by analysis of cDNA clones from cell line KG-1 and brain.</title>
        <authorList>
            <person name="Nagase T."/>
            <person name="Seki N."/>
            <person name="Ishikawa K."/>
            <person name="Ohira M."/>
            <person name="Kawarabayasi Y."/>
            <person name="Ohara O."/>
            <person name="Tanaka A."/>
            <person name="Kotani H."/>
            <person name="Miyajima N."/>
            <person name="Nomura N."/>
        </authorList>
    </citation>
    <scope>NUCLEOTIDE SEQUENCE [LARGE SCALE MRNA]</scope>
    <scope>VARIANT ALA-103</scope>
    <source>
        <tissue>Bone marrow</tissue>
    </source>
</reference>
<reference key="2">
    <citation type="journal article" date="2003" name="Nature">
        <title>The DNA sequence and analysis of human chromosome 14.</title>
        <authorList>
            <person name="Heilig R."/>
            <person name="Eckenberg R."/>
            <person name="Petit J.-L."/>
            <person name="Fonknechten N."/>
            <person name="Da Silva C."/>
            <person name="Cattolico L."/>
            <person name="Levy M."/>
            <person name="Barbe V."/>
            <person name="De Berardinis V."/>
            <person name="Ureta-Vidal A."/>
            <person name="Pelletier E."/>
            <person name="Vico V."/>
            <person name="Anthouard V."/>
            <person name="Rowen L."/>
            <person name="Madan A."/>
            <person name="Qin S."/>
            <person name="Sun H."/>
            <person name="Du H."/>
            <person name="Pepin K."/>
            <person name="Artiguenave F."/>
            <person name="Robert C."/>
            <person name="Cruaud C."/>
            <person name="Bruels T."/>
            <person name="Jaillon O."/>
            <person name="Friedlander L."/>
            <person name="Samson G."/>
            <person name="Brottier P."/>
            <person name="Cure S."/>
            <person name="Segurens B."/>
            <person name="Aniere F."/>
            <person name="Samain S."/>
            <person name="Crespeau H."/>
            <person name="Abbasi N."/>
            <person name="Aiach N."/>
            <person name="Boscus D."/>
            <person name="Dickhoff R."/>
            <person name="Dors M."/>
            <person name="Dubois I."/>
            <person name="Friedman C."/>
            <person name="Gouyvenoux M."/>
            <person name="James R."/>
            <person name="Madan A."/>
            <person name="Mairey-Estrada B."/>
            <person name="Mangenot S."/>
            <person name="Martins N."/>
            <person name="Menard M."/>
            <person name="Oztas S."/>
            <person name="Ratcliffe A."/>
            <person name="Shaffer T."/>
            <person name="Trask B."/>
            <person name="Vacherie B."/>
            <person name="Bellemere C."/>
            <person name="Belser C."/>
            <person name="Besnard-Gonnet M."/>
            <person name="Bartol-Mavel D."/>
            <person name="Boutard M."/>
            <person name="Briez-Silla S."/>
            <person name="Combette S."/>
            <person name="Dufosse-Laurent V."/>
            <person name="Ferron C."/>
            <person name="Lechaplais C."/>
            <person name="Louesse C."/>
            <person name="Muselet D."/>
            <person name="Magdelenat G."/>
            <person name="Pateau E."/>
            <person name="Petit E."/>
            <person name="Sirvain-Trukniewicz P."/>
            <person name="Trybou A."/>
            <person name="Vega-Czarny N."/>
            <person name="Bataille E."/>
            <person name="Bluet E."/>
            <person name="Bordelais I."/>
            <person name="Dubois M."/>
            <person name="Dumont C."/>
            <person name="Guerin T."/>
            <person name="Haffray S."/>
            <person name="Hammadi R."/>
            <person name="Muanga J."/>
            <person name="Pellouin V."/>
            <person name="Robert D."/>
            <person name="Wunderle E."/>
            <person name="Gauguet G."/>
            <person name="Roy A."/>
            <person name="Sainte-Marthe L."/>
            <person name="Verdier J."/>
            <person name="Verdier-Discala C."/>
            <person name="Hillier L.W."/>
            <person name="Fulton L."/>
            <person name="McPherson J."/>
            <person name="Matsuda F."/>
            <person name="Wilson R."/>
            <person name="Scarpelli C."/>
            <person name="Gyapay G."/>
            <person name="Wincker P."/>
            <person name="Saurin W."/>
            <person name="Quetier F."/>
            <person name="Waterston R."/>
            <person name="Hood L."/>
            <person name="Weissenbach J."/>
        </authorList>
    </citation>
    <scope>NUCLEOTIDE SEQUENCE [LARGE SCALE GENOMIC DNA]</scope>
</reference>
<reference key="3">
    <citation type="journal article" date="2004" name="Genome Res.">
        <title>The status, quality, and expansion of the NIH full-length cDNA project: the Mammalian Gene Collection (MGC).</title>
        <authorList>
            <consortium name="The MGC Project Team"/>
        </authorList>
    </citation>
    <scope>NUCLEOTIDE SEQUENCE [LARGE SCALE MRNA]</scope>
    <scope>VARIANT ALA-103</scope>
    <source>
        <tissue>Brain</tissue>
    </source>
</reference>
<reference key="4">
    <citation type="journal article" date="2013" name="J. Proteome Res.">
        <title>Toward a comprehensive characterization of a human cancer cell phosphoproteome.</title>
        <authorList>
            <person name="Zhou H."/>
            <person name="Di Palma S."/>
            <person name="Preisinger C."/>
            <person name="Peng M."/>
            <person name="Polat A.N."/>
            <person name="Heck A.J."/>
            <person name="Mohammed S."/>
        </authorList>
    </citation>
    <scope>PHOSPHORYLATION [LARGE SCALE ANALYSIS] AT SER-105</scope>
    <scope>VARIANT [LARGE SCALE ANALYSIS] ALA-103</scope>
    <scope>IDENTIFICATION BY MASS SPECTROMETRY [LARGE SCALE ANALYSIS]</scope>
    <source>
        <tissue>Cervix carcinoma</tissue>
    </source>
</reference>
<dbReference type="EMBL" id="D86980">
    <property type="protein sequence ID" value="BAA13216.1"/>
    <property type="status" value="ALT_INIT"/>
    <property type="molecule type" value="mRNA"/>
</dbReference>
<dbReference type="EMBL" id="AC004816">
    <property type="status" value="NOT_ANNOTATED_CDS"/>
    <property type="molecule type" value="Genomic_DNA"/>
</dbReference>
<dbReference type="EMBL" id="AL357153">
    <property type="status" value="NOT_ANNOTATED_CDS"/>
    <property type="molecule type" value="Genomic_DNA"/>
</dbReference>
<dbReference type="EMBL" id="BC047950">
    <property type="protein sequence ID" value="AAH47950.1"/>
    <property type="status" value="ALT_INIT"/>
    <property type="molecule type" value="mRNA"/>
</dbReference>
<dbReference type="CCDS" id="CCDS45132.1"/>
<dbReference type="RefSeq" id="NP_056166.1">
    <property type="nucleotide sequence ID" value="NM_015351.2"/>
</dbReference>
<dbReference type="SMR" id="Q92623"/>
<dbReference type="BioGRID" id="117055">
    <property type="interactions" value="16"/>
</dbReference>
<dbReference type="FunCoup" id="Q92623">
    <property type="interactions" value="72"/>
</dbReference>
<dbReference type="IntAct" id="Q92623">
    <property type="interactions" value="3"/>
</dbReference>
<dbReference type="STRING" id="9606.ENSP00000256367"/>
<dbReference type="GlyGen" id="Q92623">
    <property type="glycosylation" value="1 site, 1 O-linked glycan (1 site)"/>
</dbReference>
<dbReference type="iPTMnet" id="Q92623"/>
<dbReference type="PhosphoSitePlus" id="Q92623"/>
<dbReference type="BioMuta" id="TTC9"/>
<dbReference type="DMDM" id="296453008"/>
<dbReference type="jPOST" id="Q92623"/>
<dbReference type="MassIVE" id="Q92623"/>
<dbReference type="PaxDb" id="9606-ENSP00000256367"/>
<dbReference type="PeptideAtlas" id="Q92623"/>
<dbReference type="ProteomicsDB" id="75378"/>
<dbReference type="Pumba" id="Q92623"/>
<dbReference type="Antibodypedia" id="55304">
    <property type="antibodies" value="4 antibodies from 4 providers"/>
</dbReference>
<dbReference type="DNASU" id="23508"/>
<dbReference type="Ensembl" id="ENST00000256367.3">
    <property type="protein sequence ID" value="ENSP00000256367.2"/>
    <property type="gene ID" value="ENSG00000133985.3"/>
</dbReference>
<dbReference type="GeneID" id="23508"/>
<dbReference type="KEGG" id="hsa:23508"/>
<dbReference type="MANE-Select" id="ENST00000256367.3">
    <property type="protein sequence ID" value="ENSP00000256367.2"/>
    <property type="RefSeq nucleotide sequence ID" value="NM_015351.2"/>
    <property type="RefSeq protein sequence ID" value="NP_056166.1"/>
</dbReference>
<dbReference type="UCSC" id="uc001xmi.2">
    <property type="organism name" value="human"/>
</dbReference>
<dbReference type="AGR" id="HGNC:20267"/>
<dbReference type="CTD" id="23508"/>
<dbReference type="DisGeNET" id="23508"/>
<dbReference type="GeneCards" id="TTC9"/>
<dbReference type="HGNC" id="HGNC:20267">
    <property type="gene designation" value="TTC9"/>
</dbReference>
<dbReference type="HPA" id="ENSG00000133985">
    <property type="expression patterns" value="Tissue enhanced (esophagus)"/>
</dbReference>
<dbReference type="MIM" id="610488">
    <property type="type" value="gene"/>
</dbReference>
<dbReference type="neXtProt" id="NX_Q92623"/>
<dbReference type="OpenTargets" id="ENSG00000133985"/>
<dbReference type="PharmGKB" id="PA134905515"/>
<dbReference type="VEuPathDB" id="HostDB:ENSG00000133985"/>
<dbReference type="eggNOG" id="ENOG502QZUJ">
    <property type="taxonomic scope" value="Eukaryota"/>
</dbReference>
<dbReference type="GeneTree" id="ENSGT00940000161472"/>
<dbReference type="HOGENOM" id="CLU_100621_0_0_1"/>
<dbReference type="InParanoid" id="Q92623"/>
<dbReference type="OMA" id="RSSGCGQ"/>
<dbReference type="OrthoDB" id="433738at2759"/>
<dbReference type="PAN-GO" id="Q92623">
    <property type="GO annotations" value="0 GO annotations based on evolutionary models"/>
</dbReference>
<dbReference type="PhylomeDB" id="Q92623"/>
<dbReference type="TreeFam" id="TF331917"/>
<dbReference type="PathwayCommons" id="Q92623"/>
<dbReference type="SignaLink" id="Q92623"/>
<dbReference type="BioGRID-ORCS" id="23508">
    <property type="hits" value="7 hits in 1147 CRISPR screens"/>
</dbReference>
<dbReference type="ChiTaRS" id="TTC9">
    <property type="organism name" value="human"/>
</dbReference>
<dbReference type="GenomeRNAi" id="23508"/>
<dbReference type="Pharos" id="Q92623">
    <property type="development level" value="Tdark"/>
</dbReference>
<dbReference type="PRO" id="PR:Q92623"/>
<dbReference type="Proteomes" id="UP000005640">
    <property type="component" value="Chromosome 14"/>
</dbReference>
<dbReference type="RNAct" id="Q92623">
    <property type="molecule type" value="protein"/>
</dbReference>
<dbReference type="Bgee" id="ENSG00000133985">
    <property type="expression patterns" value="Expressed in amniotic fluid and 160 other cell types or tissues"/>
</dbReference>
<dbReference type="ExpressionAtlas" id="Q92623">
    <property type="expression patterns" value="baseline and differential"/>
</dbReference>
<dbReference type="GO" id="GO:0060348">
    <property type="term" value="P:bone development"/>
    <property type="evidence" value="ECO:0007669"/>
    <property type="project" value="Ensembl"/>
</dbReference>
<dbReference type="FunFam" id="1.25.40.10:FF:000264">
    <property type="entry name" value="Tetratricopeptide repeat protein 9A"/>
    <property type="match status" value="1"/>
</dbReference>
<dbReference type="Gene3D" id="1.25.40.10">
    <property type="entry name" value="Tetratricopeptide repeat domain"/>
    <property type="match status" value="1"/>
</dbReference>
<dbReference type="InterPro" id="IPR050754">
    <property type="entry name" value="FKBP4/5/8-like"/>
</dbReference>
<dbReference type="InterPro" id="IPR011990">
    <property type="entry name" value="TPR-like_helical_dom_sf"/>
</dbReference>
<dbReference type="InterPro" id="IPR013105">
    <property type="entry name" value="TPR_2"/>
</dbReference>
<dbReference type="InterPro" id="IPR019734">
    <property type="entry name" value="TPR_rpt"/>
</dbReference>
<dbReference type="PANTHER" id="PTHR46512">
    <property type="entry name" value="PEPTIDYLPROLYL ISOMERASE"/>
    <property type="match status" value="1"/>
</dbReference>
<dbReference type="PANTHER" id="PTHR46512:SF5">
    <property type="entry name" value="TETRATRICOPEPTIDE REPEAT DOMAIN 9"/>
    <property type="match status" value="1"/>
</dbReference>
<dbReference type="Pfam" id="PF07719">
    <property type="entry name" value="TPR_2"/>
    <property type="match status" value="1"/>
</dbReference>
<dbReference type="SMART" id="SM00028">
    <property type="entry name" value="TPR"/>
    <property type="match status" value="3"/>
</dbReference>
<dbReference type="SUPFAM" id="SSF48452">
    <property type="entry name" value="TPR-like"/>
    <property type="match status" value="1"/>
</dbReference>
<dbReference type="PROSITE" id="PS50005">
    <property type="entry name" value="TPR"/>
    <property type="match status" value="1"/>
</dbReference>
<dbReference type="PROSITE" id="PS50293">
    <property type="entry name" value="TPR_REGION"/>
    <property type="match status" value="1"/>
</dbReference>
<name>TTC9A_HUMAN</name>
<accession>Q92623</accession>
<accession>Q86WT2</accession>